<evidence type="ECO:0000250" key="1"/>
<evidence type="ECO:0000250" key="2">
    <source>
        <dbReference type="UniProtKB" id="Q15390"/>
    </source>
</evidence>
<evidence type="ECO:0000250" key="3">
    <source>
        <dbReference type="UniProtKB" id="Q99MB2"/>
    </source>
</evidence>
<evidence type="ECO:0000255" key="4"/>
<evidence type="ECO:0000256" key="5">
    <source>
        <dbReference type="SAM" id="MobiDB-lite"/>
    </source>
</evidence>
<evidence type="ECO:0000305" key="6"/>
<proteinExistence type="evidence at transcript level"/>
<sequence length="335" mass="36815">MLGWIKCLMRMWFQRVGVSMQSVLWSGKPYGSSRSIVRKIGTNLSLIQCPRVQFQLTSHATEWSPTHPGEDVVATFADVGWVATDEGECSTRLRTEVRSKPPLENNPPCFEKPPSRHISLPNSSQDKPSPKTTLASEEALQKISALENELAALRAQIAKIVTLQEQQSPSAGCLDSSTPVIVVPPPPPPPPPPPPLPPPPLVLHPSTSALDLIKERREQRLSAGKTLAKGHPKKLDMPNMLEILKDMNSVKLRPVKRSEKDEKPRPVDITDPAALIAEALKKKFAYRHRHNSQGEAERGIPKPESDATSEPALFGPHTLKSTGKMKALIENVSDS</sequence>
<organism>
    <name type="scientific">Rattus norvegicus</name>
    <name type="common">Rat</name>
    <dbReference type="NCBI Taxonomy" id="10116"/>
    <lineage>
        <taxon>Eukaryota</taxon>
        <taxon>Metazoa</taxon>
        <taxon>Chordata</taxon>
        <taxon>Craniata</taxon>
        <taxon>Vertebrata</taxon>
        <taxon>Euteleostomi</taxon>
        <taxon>Mammalia</taxon>
        <taxon>Eutheria</taxon>
        <taxon>Euarchontoglires</taxon>
        <taxon>Glires</taxon>
        <taxon>Rodentia</taxon>
        <taxon>Myomorpha</taxon>
        <taxon>Muroidea</taxon>
        <taxon>Muridae</taxon>
        <taxon>Murinae</taxon>
        <taxon>Rattus</taxon>
    </lineage>
</organism>
<reference key="1">
    <citation type="submission" date="2007-01" db="EMBL/GenBank/DDBJ databases">
        <authorList>
            <person name="Hagemann C."/>
            <person name="Stojic J."/>
            <person name="Weigelin B."/>
            <person name="Gerngras S."/>
            <person name="Roosen K."/>
            <person name="Vince G.H."/>
        </authorList>
    </citation>
    <scope>NUCLEOTIDE SEQUENCE [MRNA]</scope>
    <source>
        <strain>New England Deaconess Hospital</strain>
    </source>
</reference>
<reference key="2">
    <citation type="submission" date="2005-07" db="EMBL/GenBank/DDBJ databases">
        <authorList>
            <person name="Mural R.J."/>
            <person name="Adams M.D."/>
            <person name="Myers E.W."/>
            <person name="Smith H.O."/>
            <person name="Venter J.C."/>
        </authorList>
    </citation>
    <scope>NUCLEOTIDE SEQUENCE [LARGE SCALE GENOMIC DNA]</scope>
    <source>
        <strain>Brown Norway</strain>
    </source>
</reference>
<keyword id="KW-0175">Coiled coil</keyword>
<keyword id="KW-0496">Mitochondrion</keyword>
<keyword id="KW-0597">Phosphoprotein</keyword>
<keyword id="KW-1185">Reference proteome</keyword>
<keyword id="KW-0809">Transit peptide</keyword>
<gene>
    <name type="primary">Mtfr1</name>
</gene>
<dbReference type="EMBL" id="EF221637">
    <property type="protein sequence ID" value="ABN11176.1"/>
    <property type="molecule type" value="mRNA"/>
</dbReference>
<dbReference type="EMBL" id="CH473961">
    <property type="protein sequence ID" value="EDM01060.1"/>
    <property type="molecule type" value="Genomic_DNA"/>
</dbReference>
<dbReference type="EMBL" id="CH473961">
    <property type="protein sequence ID" value="EDM01061.1"/>
    <property type="molecule type" value="Genomic_DNA"/>
</dbReference>
<dbReference type="RefSeq" id="NP_001094447.2">
    <property type="nucleotide sequence ID" value="NM_001100977.2"/>
</dbReference>
<dbReference type="RefSeq" id="XP_006232240.1">
    <property type="nucleotide sequence ID" value="XM_006232178.2"/>
</dbReference>
<dbReference type="RefSeq" id="XP_006232241.1">
    <property type="nucleotide sequence ID" value="XM_006232179.5"/>
</dbReference>
<dbReference type="RefSeq" id="XP_017446436.1">
    <property type="nucleotide sequence ID" value="XM_017590947.1"/>
</dbReference>
<dbReference type="RefSeq" id="XP_063138063.1">
    <property type="nucleotide sequence ID" value="XM_063281993.1"/>
</dbReference>
<dbReference type="RefSeq" id="XP_063138064.1">
    <property type="nucleotide sequence ID" value="XM_063281994.1"/>
</dbReference>
<dbReference type="RefSeq" id="XP_063138065.1">
    <property type="nucleotide sequence ID" value="XM_063281995.1"/>
</dbReference>
<dbReference type="RefSeq" id="XP_063138066.1">
    <property type="nucleotide sequence ID" value="XM_063281996.1"/>
</dbReference>
<dbReference type="RefSeq" id="XP_063138067.1">
    <property type="nucleotide sequence ID" value="XM_063281997.1"/>
</dbReference>
<dbReference type="RefSeq" id="XP_063138068.1">
    <property type="nucleotide sequence ID" value="XM_063281998.1"/>
</dbReference>
<dbReference type="SMR" id="G3V9A7"/>
<dbReference type="FunCoup" id="G3V9A7">
    <property type="interactions" value="697"/>
</dbReference>
<dbReference type="STRING" id="10116.ENSRNOP00000040894"/>
<dbReference type="CarbonylDB" id="G3V9A7"/>
<dbReference type="iPTMnet" id="G3V9A7"/>
<dbReference type="PhosphoSitePlus" id="G3V9A7"/>
<dbReference type="PaxDb" id="10116-ENSRNOP00000040894"/>
<dbReference type="Ensembl" id="ENSRNOT00000045586.4">
    <property type="protein sequence ID" value="ENSRNOP00000040894.3"/>
    <property type="gene ID" value="ENSRNOG00000021359.5"/>
</dbReference>
<dbReference type="GeneID" id="311403"/>
<dbReference type="KEGG" id="rno:311403"/>
<dbReference type="AGR" id="RGD:1304936"/>
<dbReference type="CTD" id="9650"/>
<dbReference type="RGD" id="1304936">
    <property type="gene designation" value="Mtfr1"/>
</dbReference>
<dbReference type="eggNOG" id="ENOG502QSSN">
    <property type="taxonomic scope" value="Eukaryota"/>
</dbReference>
<dbReference type="GeneTree" id="ENSGT00950000183215"/>
<dbReference type="HOGENOM" id="CLU_059135_0_0_1"/>
<dbReference type="InParanoid" id="G3V9A7"/>
<dbReference type="OMA" id="CPRIHFQ"/>
<dbReference type="TreeFam" id="TF331404"/>
<dbReference type="PRO" id="PR:G3V9A7"/>
<dbReference type="Proteomes" id="UP000002494">
    <property type="component" value="Chromosome 2"/>
</dbReference>
<dbReference type="Proteomes" id="UP000234681">
    <property type="component" value="Chromosome 2"/>
</dbReference>
<dbReference type="Bgee" id="ENSRNOG00000021359">
    <property type="expression patterns" value="Expressed in testis and 18 other cell types or tissues"/>
</dbReference>
<dbReference type="GO" id="GO:0005739">
    <property type="term" value="C:mitochondrion"/>
    <property type="evidence" value="ECO:0000250"/>
    <property type="project" value="UniProtKB"/>
</dbReference>
<dbReference type="GO" id="GO:0005886">
    <property type="term" value="C:plasma membrane"/>
    <property type="evidence" value="ECO:0000266"/>
    <property type="project" value="RGD"/>
</dbReference>
<dbReference type="GO" id="GO:0009060">
    <property type="term" value="P:aerobic respiration"/>
    <property type="evidence" value="ECO:0000250"/>
    <property type="project" value="UniProtKB"/>
</dbReference>
<dbReference type="GO" id="GO:0000266">
    <property type="term" value="P:mitochondrial fission"/>
    <property type="evidence" value="ECO:0000250"/>
    <property type="project" value="UniProtKB"/>
</dbReference>
<dbReference type="GO" id="GO:0007005">
    <property type="term" value="P:mitochondrion organization"/>
    <property type="evidence" value="ECO:0000250"/>
    <property type="project" value="UniProtKB"/>
</dbReference>
<dbReference type="InterPro" id="IPR007972">
    <property type="entry name" value="Mtfr1"/>
</dbReference>
<dbReference type="PANTHER" id="PTHR14215:SF1">
    <property type="entry name" value="MITOCHONDRIAL FISSION REGULATOR 1"/>
    <property type="match status" value="1"/>
</dbReference>
<dbReference type="PANTHER" id="PTHR14215">
    <property type="entry name" value="PROTEIN OF UNKNOWN FUNCTION DUF729"/>
    <property type="match status" value="1"/>
</dbReference>
<dbReference type="Pfam" id="PF05308">
    <property type="entry name" value="Mito_fiss_reg"/>
    <property type="match status" value="1"/>
</dbReference>
<protein>
    <recommendedName>
        <fullName>Mitochondrial fission regulator 1</fullName>
    </recommendedName>
</protein>
<feature type="transit peptide" description="Mitochondrion" evidence="4">
    <location>
        <begin position="1"/>
        <end position="48"/>
    </location>
</feature>
<feature type="chain" id="PRO_0000417555" description="Mitochondrial fission regulator 1">
    <location>
        <begin position="49"/>
        <end position="335"/>
    </location>
</feature>
<feature type="region of interest" description="Disordered" evidence="5">
    <location>
        <begin position="94"/>
        <end position="135"/>
    </location>
</feature>
<feature type="region of interest" description="Disordered" evidence="5">
    <location>
        <begin position="168"/>
        <end position="201"/>
    </location>
</feature>
<feature type="region of interest" description="Necessary and sufficient to promote mitochondrial fission" evidence="1">
    <location>
        <begin position="178"/>
        <end position="306"/>
    </location>
</feature>
<feature type="region of interest" description="Disordered" evidence="5">
    <location>
        <begin position="286"/>
        <end position="335"/>
    </location>
</feature>
<feature type="coiled-coil region" evidence="4">
    <location>
        <begin position="131"/>
        <end position="167"/>
    </location>
</feature>
<feature type="compositionally biased region" description="Polar residues" evidence="5">
    <location>
        <begin position="120"/>
        <end position="135"/>
    </location>
</feature>
<feature type="compositionally biased region" description="Polar residues" evidence="5">
    <location>
        <begin position="168"/>
        <end position="178"/>
    </location>
</feature>
<feature type="compositionally biased region" description="Pro residues" evidence="5">
    <location>
        <begin position="182"/>
        <end position="201"/>
    </location>
</feature>
<feature type="compositionally biased region" description="Basic and acidic residues" evidence="5">
    <location>
        <begin position="295"/>
        <end position="305"/>
    </location>
</feature>
<feature type="modified residue" description="Phosphoserine" evidence="2">
    <location>
        <position position="119"/>
    </location>
</feature>
<feature type="modified residue" description="Phosphoserine" evidence="3">
    <location>
        <position position="129"/>
    </location>
</feature>
<feature type="sequence conflict" description="In Ref. 1; ABN11176." evidence="6" ref="1">
    <original>V</original>
    <variation>VPP</variation>
    <location>
        <position position="183"/>
    </location>
</feature>
<accession>G3V9A7</accession>
<accession>A3F823</accession>
<name>MTFR1_RAT</name>
<comment type="function">
    <text evidence="1">May play a role in mitochondrial aerobic respiration. May also regulate mitochondrial organization and fission (By similarity).</text>
</comment>
<comment type="subcellular location">
    <subcellularLocation>
        <location evidence="1">Mitochondrion</location>
    </subcellularLocation>
    <text evidence="1">May be associated with the inner and the outer mitochondrial membrane.</text>
</comment>
<comment type="similarity">
    <text evidence="6">Belongs to the MTFR1 family.</text>
</comment>